<gene>
    <name evidence="1" type="primary">trmFO</name>
    <name type="ordered locus">AM1_2655</name>
</gene>
<organism>
    <name type="scientific">Acaryochloris marina (strain MBIC 11017)</name>
    <dbReference type="NCBI Taxonomy" id="329726"/>
    <lineage>
        <taxon>Bacteria</taxon>
        <taxon>Bacillati</taxon>
        <taxon>Cyanobacteriota</taxon>
        <taxon>Cyanophyceae</taxon>
        <taxon>Acaryochloridales</taxon>
        <taxon>Acaryochloridaceae</taxon>
        <taxon>Acaryochloris</taxon>
    </lineage>
</organism>
<evidence type="ECO:0000255" key="1">
    <source>
        <dbReference type="HAMAP-Rule" id="MF_01037"/>
    </source>
</evidence>
<reference key="1">
    <citation type="journal article" date="2008" name="Proc. Natl. Acad. Sci. U.S.A.">
        <title>Niche adaptation and genome expansion in the chlorophyll d-producing cyanobacterium Acaryochloris marina.</title>
        <authorList>
            <person name="Swingley W.D."/>
            <person name="Chen M."/>
            <person name="Cheung P.C."/>
            <person name="Conrad A.L."/>
            <person name="Dejesa L.C."/>
            <person name="Hao J."/>
            <person name="Honchak B.M."/>
            <person name="Karbach L.E."/>
            <person name="Kurdoglu A."/>
            <person name="Lahiri S."/>
            <person name="Mastrian S.D."/>
            <person name="Miyashita H."/>
            <person name="Page L."/>
            <person name="Ramakrishna P."/>
            <person name="Satoh S."/>
            <person name="Sattley W.M."/>
            <person name="Shimada Y."/>
            <person name="Taylor H.L."/>
            <person name="Tomo T."/>
            <person name="Tsuchiya T."/>
            <person name="Wang Z.T."/>
            <person name="Raymond J."/>
            <person name="Mimuro M."/>
            <person name="Blankenship R.E."/>
            <person name="Touchman J.W."/>
        </authorList>
    </citation>
    <scope>NUCLEOTIDE SEQUENCE [LARGE SCALE GENOMIC DNA]</scope>
    <source>
        <strain>MBIC 11017</strain>
    </source>
</reference>
<keyword id="KW-0963">Cytoplasm</keyword>
<keyword id="KW-0274">FAD</keyword>
<keyword id="KW-0285">Flavoprotein</keyword>
<keyword id="KW-0489">Methyltransferase</keyword>
<keyword id="KW-0520">NAD</keyword>
<keyword id="KW-0521">NADP</keyword>
<keyword id="KW-1185">Reference proteome</keyword>
<keyword id="KW-0808">Transferase</keyword>
<keyword id="KW-0819">tRNA processing</keyword>
<name>TRMFO_ACAM1</name>
<accession>B0C6V8</accession>
<proteinExistence type="inferred from homology"/>
<sequence>MDHQQPIQVIGGGLAGTEAAWQIAQAGWPVILHEMRSVEEERLTPAHHTDQLAELVCSNSFGAQASDRAAGLLHAELRQLGSIIIRKADEHQVPAGGALAVDRGVFSRNLTETLAEHPNVELRRGEVPTLPIDGTVVLTSGPLTSAALTESLHQFTGQDYLSFFDAASPIIVGESINRDVAFLASRYDRGEAAYLNCPMNREQYLAFWQALCAAEQAELKDFEKETAKFFEGCLPIEEMARRGEDTMRYGPLKPVGLFDARYGDFKAPENQKYRPYAVAQLRQEDKAGKLWNLVGFQTNLRWGEQKRVFQMIPGLESAEFVRMGVMHRNTFINAPELLHPTLQFKQRPTLLAAGQLIGTEGYTAATAGGWLAGTNAVRLAQGLNPVVLPTTTMSGSLFEFISSATPKHFQPMPPNFGIIPDLPQRVRNKRERYGVYRDRALADLTAWIAEPSLFRQTVAANSASM</sequence>
<dbReference type="EC" id="2.1.1.74" evidence="1"/>
<dbReference type="EMBL" id="CP000828">
    <property type="protein sequence ID" value="ABW27662.1"/>
    <property type="molecule type" value="Genomic_DNA"/>
</dbReference>
<dbReference type="RefSeq" id="WP_012163113.1">
    <property type="nucleotide sequence ID" value="NC_009925.1"/>
</dbReference>
<dbReference type="SMR" id="B0C6V8"/>
<dbReference type="STRING" id="329726.AM1_2655"/>
<dbReference type="KEGG" id="amr:AM1_2655"/>
<dbReference type="eggNOG" id="COG1206">
    <property type="taxonomic scope" value="Bacteria"/>
</dbReference>
<dbReference type="HOGENOM" id="CLU_033057_1_0_3"/>
<dbReference type="OrthoDB" id="9803114at2"/>
<dbReference type="Proteomes" id="UP000000268">
    <property type="component" value="Chromosome"/>
</dbReference>
<dbReference type="GO" id="GO:0005829">
    <property type="term" value="C:cytosol"/>
    <property type="evidence" value="ECO:0007669"/>
    <property type="project" value="TreeGrafter"/>
</dbReference>
<dbReference type="GO" id="GO:0050660">
    <property type="term" value="F:flavin adenine dinucleotide binding"/>
    <property type="evidence" value="ECO:0007669"/>
    <property type="project" value="UniProtKB-UniRule"/>
</dbReference>
<dbReference type="GO" id="GO:0047151">
    <property type="term" value="F:tRNA (uracil(54)-C5)-methyltransferase activity, 5,10-methylenetetrahydrofolate-dependent"/>
    <property type="evidence" value="ECO:0007669"/>
    <property type="project" value="UniProtKB-UniRule"/>
</dbReference>
<dbReference type="GO" id="GO:0030488">
    <property type="term" value="P:tRNA methylation"/>
    <property type="evidence" value="ECO:0007669"/>
    <property type="project" value="TreeGrafter"/>
</dbReference>
<dbReference type="GO" id="GO:0002098">
    <property type="term" value="P:tRNA wobble uridine modification"/>
    <property type="evidence" value="ECO:0007669"/>
    <property type="project" value="TreeGrafter"/>
</dbReference>
<dbReference type="Gene3D" id="3.50.50.60">
    <property type="entry name" value="FAD/NAD(P)-binding domain"/>
    <property type="match status" value="2"/>
</dbReference>
<dbReference type="HAMAP" id="MF_01037">
    <property type="entry name" value="TrmFO"/>
    <property type="match status" value="1"/>
</dbReference>
<dbReference type="InterPro" id="IPR036188">
    <property type="entry name" value="FAD/NAD-bd_sf"/>
</dbReference>
<dbReference type="InterPro" id="IPR002218">
    <property type="entry name" value="MnmG-rel"/>
</dbReference>
<dbReference type="InterPro" id="IPR040131">
    <property type="entry name" value="MnmG_N"/>
</dbReference>
<dbReference type="InterPro" id="IPR004417">
    <property type="entry name" value="TrmFO"/>
</dbReference>
<dbReference type="NCBIfam" id="TIGR00137">
    <property type="entry name" value="gid_trmFO"/>
    <property type="match status" value="1"/>
</dbReference>
<dbReference type="NCBIfam" id="NF003739">
    <property type="entry name" value="PRK05335.1"/>
    <property type="match status" value="1"/>
</dbReference>
<dbReference type="PANTHER" id="PTHR11806">
    <property type="entry name" value="GLUCOSE INHIBITED DIVISION PROTEIN A"/>
    <property type="match status" value="1"/>
</dbReference>
<dbReference type="PANTHER" id="PTHR11806:SF2">
    <property type="entry name" value="METHYLENETETRAHYDROFOLATE--TRNA-(URACIL-5-)-METHYLTRANSFERASE TRMFO"/>
    <property type="match status" value="1"/>
</dbReference>
<dbReference type="Pfam" id="PF01134">
    <property type="entry name" value="GIDA"/>
    <property type="match status" value="1"/>
</dbReference>
<dbReference type="SUPFAM" id="SSF51905">
    <property type="entry name" value="FAD/NAD(P)-binding domain"/>
    <property type="match status" value="1"/>
</dbReference>
<comment type="function">
    <text evidence="1">Catalyzes the folate-dependent formation of 5-methyl-uridine at position 54 (M-5-U54) in all tRNAs.</text>
</comment>
<comment type="catalytic activity">
    <reaction evidence="1">
        <text>uridine(54) in tRNA + (6R)-5,10-methylene-5,6,7,8-tetrahydrofolate + NADH + H(+) = 5-methyluridine(54) in tRNA + (6S)-5,6,7,8-tetrahydrofolate + NAD(+)</text>
        <dbReference type="Rhea" id="RHEA:16873"/>
        <dbReference type="Rhea" id="RHEA-COMP:10167"/>
        <dbReference type="Rhea" id="RHEA-COMP:10193"/>
        <dbReference type="ChEBI" id="CHEBI:15378"/>
        <dbReference type="ChEBI" id="CHEBI:15636"/>
        <dbReference type="ChEBI" id="CHEBI:57453"/>
        <dbReference type="ChEBI" id="CHEBI:57540"/>
        <dbReference type="ChEBI" id="CHEBI:57945"/>
        <dbReference type="ChEBI" id="CHEBI:65315"/>
        <dbReference type="ChEBI" id="CHEBI:74447"/>
        <dbReference type="EC" id="2.1.1.74"/>
    </reaction>
</comment>
<comment type="catalytic activity">
    <reaction evidence="1">
        <text>uridine(54) in tRNA + (6R)-5,10-methylene-5,6,7,8-tetrahydrofolate + NADPH + H(+) = 5-methyluridine(54) in tRNA + (6S)-5,6,7,8-tetrahydrofolate + NADP(+)</text>
        <dbReference type="Rhea" id="RHEA:62372"/>
        <dbReference type="Rhea" id="RHEA-COMP:10167"/>
        <dbReference type="Rhea" id="RHEA-COMP:10193"/>
        <dbReference type="ChEBI" id="CHEBI:15378"/>
        <dbReference type="ChEBI" id="CHEBI:15636"/>
        <dbReference type="ChEBI" id="CHEBI:57453"/>
        <dbReference type="ChEBI" id="CHEBI:57783"/>
        <dbReference type="ChEBI" id="CHEBI:58349"/>
        <dbReference type="ChEBI" id="CHEBI:65315"/>
        <dbReference type="ChEBI" id="CHEBI:74447"/>
        <dbReference type="EC" id="2.1.1.74"/>
    </reaction>
</comment>
<comment type="cofactor">
    <cofactor evidence="1">
        <name>FAD</name>
        <dbReference type="ChEBI" id="CHEBI:57692"/>
    </cofactor>
</comment>
<comment type="subcellular location">
    <subcellularLocation>
        <location evidence="1">Cytoplasm</location>
    </subcellularLocation>
</comment>
<comment type="similarity">
    <text evidence="1">Belongs to the MnmG family. TrmFO subfamily.</text>
</comment>
<feature type="chain" id="PRO_0000346314" description="Methylenetetrahydrofolate--tRNA-(uracil-5-)-methyltransferase TrmFO">
    <location>
        <begin position="1"/>
        <end position="465"/>
    </location>
</feature>
<feature type="binding site" evidence="1">
    <location>
        <begin position="11"/>
        <end position="16"/>
    </location>
    <ligand>
        <name>FAD</name>
        <dbReference type="ChEBI" id="CHEBI:57692"/>
    </ligand>
</feature>
<protein>
    <recommendedName>
        <fullName evidence="1">Methylenetetrahydrofolate--tRNA-(uracil-5-)-methyltransferase TrmFO</fullName>
        <ecNumber evidence="1">2.1.1.74</ecNumber>
    </recommendedName>
    <alternativeName>
        <fullName evidence="1">Folate-dependent tRNA (uracil-5-)-methyltransferase</fullName>
    </alternativeName>
    <alternativeName>
        <fullName evidence="1">Folate-dependent tRNA(M-5-U54)-methyltransferase</fullName>
    </alternativeName>
</protein>